<keyword id="KW-0687">Ribonucleoprotein</keyword>
<keyword id="KW-0689">Ribosomal protein</keyword>
<keyword id="KW-0694">RNA-binding</keyword>
<keyword id="KW-0699">rRNA-binding</keyword>
<keyword id="KW-0820">tRNA-binding</keyword>
<reference key="1">
    <citation type="journal article" date="2008" name="Chem. Biol. Interact.">
        <title>Extending the Bacillus cereus group genomics to putative food-borne pathogens of different toxicity.</title>
        <authorList>
            <person name="Lapidus A."/>
            <person name="Goltsman E."/>
            <person name="Auger S."/>
            <person name="Galleron N."/>
            <person name="Segurens B."/>
            <person name="Dossat C."/>
            <person name="Land M.L."/>
            <person name="Broussolle V."/>
            <person name="Brillard J."/>
            <person name="Guinebretiere M.-H."/>
            <person name="Sanchis V."/>
            <person name="Nguen-the C."/>
            <person name="Lereclus D."/>
            <person name="Richardson P."/>
            <person name="Wincker P."/>
            <person name="Weissenbach J."/>
            <person name="Ehrlich S.D."/>
            <person name="Sorokin A."/>
        </authorList>
    </citation>
    <scope>NUCLEOTIDE SEQUENCE [LARGE SCALE GENOMIC DNA]</scope>
    <source>
        <strain>KBAB4</strain>
    </source>
</reference>
<sequence length="144" mass="16131">MLMPKRVKYRREHRGKMRGRAKGGTEIAFGEFGLQALAASWITNRQIEAARRAMTRHMKRGGKVWIKIFPSKPYTAKPLEVRMGSGKGAPEGWVAVVKPGKIMFEIAGVSEEVAREALRLAAHKLPVKCKFVKREENGGESNEN</sequence>
<organism>
    <name type="scientific">Bacillus mycoides (strain KBAB4)</name>
    <name type="common">Bacillus weihenstephanensis</name>
    <dbReference type="NCBI Taxonomy" id="315730"/>
    <lineage>
        <taxon>Bacteria</taxon>
        <taxon>Bacillati</taxon>
        <taxon>Bacillota</taxon>
        <taxon>Bacilli</taxon>
        <taxon>Bacillales</taxon>
        <taxon>Bacillaceae</taxon>
        <taxon>Bacillus</taxon>
        <taxon>Bacillus cereus group</taxon>
    </lineage>
</organism>
<feature type="chain" id="PRO_1000142926" description="Large ribosomal subunit protein uL16">
    <location>
        <begin position="1"/>
        <end position="144"/>
    </location>
</feature>
<dbReference type="EMBL" id="CP000903">
    <property type="protein sequence ID" value="ABY41381.1"/>
    <property type="molecule type" value="Genomic_DNA"/>
</dbReference>
<dbReference type="RefSeq" id="WP_002063419.1">
    <property type="nucleotide sequence ID" value="NC_010184.1"/>
</dbReference>
<dbReference type="SMR" id="A9VP84"/>
<dbReference type="KEGG" id="bwe:BcerKBAB4_0112"/>
<dbReference type="eggNOG" id="COG0197">
    <property type="taxonomic scope" value="Bacteria"/>
</dbReference>
<dbReference type="HOGENOM" id="CLU_078858_2_1_9"/>
<dbReference type="Proteomes" id="UP000002154">
    <property type="component" value="Chromosome"/>
</dbReference>
<dbReference type="GO" id="GO:0022625">
    <property type="term" value="C:cytosolic large ribosomal subunit"/>
    <property type="evidence" value="ECO:0007669"/>
    <property type="project" value="TreeGrafter"/>
</dbReference>
<dbReference type="GO" id="GO:0019843">
    <property type="term" value="F:rRNA binding"/>
    <property type="evidence" value="ECO:0007669"/>
    <property type="project" value="UniProtKB-UniRule"/>
</dbReference>
<dbReference type="GO" id="GO:0003735">
    <property type="term" value="F:structural constituent of ribosome"/>
    <property type="evidence" value="ECO:0007669"/>
    <property type="project" value="InterPro"/>
</dbReference>
<dbReference type="GO" id="GO:0000049">
    <property type="term" value="F:tRNA binding"/>
    <property type="evidence" value="ECO:0007669"/>
    <property type="project" value="UniProtKB-KW"/>
</dbReference>
<dbReference type="GO" id="GO:0006412">
    <property type="term" value="P:translation"/>
    <property type="evidence" value="ECO:0007669"/>
    <property type="project" value="UniProtKB-UniRule"/>
</dbReference>
<dbReference type="CDD" id="cd01433">
    <property type="entry name" value="Ribosomal_L16_L10e"/>
    <property type="match status" value="1"/>
</dbReference>
<dbReference type="FunFam" id="3.90.1170.10:FF:000001">
    <property type="entry name" value="50S ribosomal protein L16"/>
    <property type="match status" value="1"/>
</dbReference>
<dbReference type="Gene3D" id="3.90.1170.10">
    <property type="entry name" value="Ribosomal protein L10e/L16"/>
    <property type="match status" value="1"/>
</dbReference>
<dbReference type="HAMAP" id="MF_01342">
    <property type="entry name" value="Ribosomal_uL16"/>
    <property type="match status" value="1"/>
</dbReference>
<dbReference type="InterPro" id="IPR047873">
    <property type="entry name" value="Ribosomal_uL16"/>
</dbReference>
<dbReference type="InterPro" id="IPR000114">
    <property type="entry name" value="Ribosomal_uL16_bact-type"/>
</dbReference>
<dbReference type="InterPro" id="IPR020798">
    <property type="entry name" value="Ribosomal_uL16_CS"/>
</dbReference>
<dbReference type="InterPro" id="IPR016180">
    <property type="entry name" value="Ribosomal_uL16_dom"/>
</dbReference>
<dbReference type="InterPro" id="IPR036920">
    <property type="entry name" value="Ribosomal_uL16_sf"/>
</dbReference>
<dbReference type="NCBIfam" id="TIGR01164">
    <property type="entry name" value="rplP_bact"/>
    <property type="match status" value="1"/>
</dbReference>
<dbReference type="PANTHER" id="PTHR12220">
    <property type="entry name" value="50S/60S RIBOSOMAL PROTEIN L16"/>
    <property type="match status" value="1"/>
</dbReference>
<dbReference type="PANTHER" id="PTHR12220:SF13">
    <property type="entry name" value="LARGE RIBOSOMAL SUBUNIT PROTEIN UL16M"/>
    <property type="match status" value="1"/>
</dbReference>
<dbReference type="Pfam" id="PF00252">
    <property type="entry name" value="Ribosomal_L16"/>
    <property type="match status" value="1"/>
</dbReference>
<dbReference type="PRINTS" id="PR00060">
    <property type="entry name" value="RIBOSOMALL16"/>
</dbReference>
<dbReference type="SUPFAM" id="SSF54686">
    <property type="entry name" value="Ribosomal protein L16p/L10e"/>
    <property type="match status" value="1"/>
</dbReference>
<dbReference type="PROSITE" id="PS00586">
    <property type="entry name" value="RIBOSOMAL_L16_1"/>
    <property type="match status" value="1"/>
</dbReference>
<dbReference type="PROSITE" id="PS00701">
    <property type="entry name" value="RIBOSOMAL_L16_2"/>
    <property type="match status" value="1"/>
</dbReference>
<comment type="function">
    <text evidence="1">Binds 23S rRNA and is also seen to make contacts with the A and possibly P site tRNAs.</text>
</comment>
<comment type="subunit">
    <text evidence="1">Part of the 50S ribosomal subunit.</text>
</comment>
<comment type="similarity">
    <text evidence="1">Belongs to the universal ribosomal protein uL16 family.</text>
</comment>
<accession>A9VP84</accession>
<evidence type="ECO:0000255" key="1">
    <source>
        <dbReference type="HAMAP-Rule" id="MF_01342"/>
    </source>
</evidence>
<evidence type="ECO:0000305" key="2"/>
<protein>
    <recommendedName>
        <fullName evidence="1">Large ribosomal subunit protein uL16</fullName>
    </recommendedName>
    <alternativeName>
        <fullName evidence="2">50S ribosomal protein L16</fullName>
    </alternativeName>
</protein>
<name>RL16_BACMK</name>
<proteinExistence type="inferred from homology"/>
<gene>
    <name evidence="1" type="primary">rplP</name>
    <name type="ordered locus">BcerKBAB4_0112</name>
</gene>